<comment type="function">
    <text evidence="1">Binds 16S rRNA, required for the assembly of 30S particles and may also be responsible for determining the conformation of the 16S rRNA at the A site.</text>
</comment>
<comment type="cofactor">
    <cofactor evidence="1">
        <name>Zn(2+)</name>
        <dbReference type="ChEBI" id="CHEBI:29105"/>
    </cofactor>
    <text evidence="1">Binds 1 zinc ion per subunit.</text>
</comment>
<comment type="subunit">
    <text evidence="1">Part of the 30S ribosomal subunit. Contacts proteins S3 and S10.</text>
</comment>
<comment type="similarity">
    <text evidence="1">Belongs to the universal ribosomal protein uS14 family. Zinc-binding uS14 subfamily.</text>
</comment>
<accession>B7JKD2</accession>
<sequence length="61" mass="7296">MAKKSMIAKQKRTPKFKVQEYTRCERCGRPHSVYRKFKLCRICFRELAYKGQIPGVKKASW</sequence>
<feature type="chain" id="PRO_1000143880" description="Small ribosomal subunit protein uS14">
    <location>
        <begin position="1"/>
        <end position="61"/>
    </location>
</feature>
<feature type="binding site" evidence="1">
    <location>
        <position position="24"/>
    </location>
    <ligand>
        <name>Zn(2+)</name>
        <dbReference type="ChEBI" id="CHEBI:29105"/>
    </ligand>
</feature>
<feature type="binding site" evidence="1">
    <location>
        <position position="27"/>
    </location>
    <ligand>
        <name>Zn(2+)</name>
        <dbReference type="ChEBI" id="CHEBI:29105"/>
    </ligand>
</feature>
<feature type="binding site" evidence="1">
    <location>
        <position position="40"/>
    </location>
    <ligand>
        <name>Zn(2+)</name>
        <dbReference type="ChEBI" id="CHEBI:29105"/>
    </ligand>
</feature>
<feature type="binding site" evidence="1">
    <location>
        <position position="43"/>
    </location>
    <ligand>
        <name>Zn(2+)</name>
        <dbReference type="ChEBI" id="CHEBI:29105"/>
    </ligand>
</feature>
<protein>
    <recommendedName>
        <fullName evidence="1">Small ribosomal subunit protein uS14</fullName>
    </recommendedName>
    <alternativeName>
        <fullName evidence="2">30S ribosomal protein S14 type Z</fullName>
    </alternativeName>
</protein>
<keyword id="KW-0479">Metal-binding</keyword>
<keyword id="KW-0687">Ribonucleoprotein</keyword>
<keyword id="KW-0689">Ribosomal protein</keyword>
<keyword id="KW-0694">RNA-binding</keyword>
<keyword id="KW-0699">rRNA-binding</keyword>
<keyword id="KW-0862">Zinc</keyword>
<organism>
    <name type="scientific">Bacillus cereus (strain AH820)</name>
    <dbReference type="NCBI Taxonomy" id="405535"/>
    <lineage>
        <taxon>Bacteria</taxon>
        <taxon>Bacillati</taxon>
        <taxon>Bacillota</taxon>
        <taxon>Bacilli</taxon>
        <taxon>Bacillales</taxon>
        <taxon>Bacillaceae</taxon>
        <taxon>Bacillus</taxon>
        <taxon>Bacillus cereus group</taxon>
    </lineage>
</organism>
<dbReference type="EMBL" id="CP001283">
    <property type="protein sequence ID" value="ACK90126.1"/>
    <property type="molecule type" value="Genomic_DNA"/>
</dbReference>
<dbReference type="RefSeq" id="WP_001085700.1">
    <property type="nucleotide sequence ID" value="NC_011773.1"/>
</dbReference>
<dbReference type="SMR" id="B7JKD2"/>
<dbReference type="GeneID" id="93010930"/>
<dbReference type="KEGG" id="bcu:BCAH820_0135"/>
<dbReference type="HOGENOM" id="CLU_139869_3_0_9"/>
<dbReference type="Proteomes" id="UP000001363">
    <property type="component" value="Chromosome"/>
</dbReference>
<dbReference type="GO" id="GO:0015935">
    <property type="term" value="C:small ribosomal subunit"/>
    <property type="evidence" value="ECO:0007669"/>
    <property type="project" value="TreeGrafter"/>
</dbReference>
<dbReference type="GO" id="GO:0019843">
    <property type="term" value="F:rRNA binding"/>
    <property type="evidence" value="ECO:0007669"/>
    <property type="project" value="UniProtKB-UniRule"/>
</dbReference>
<dbReference type="GO" id="GO:0003735">
    <property type="term" value="F:structural constituent of ribosome"/>
    <property type="evidence" value="ECO:0007669"/>
    <property type="project" value="InterPro"/>
</dbReference>
<dbReference type="GO" id="GO:0008270">
    <property type="term" value="F:zinc ion binding"/>
    <property type="evidence" value="ECO:0007669"/>
    <property type="project" value="UniProtKB-UniRule"/>
</dbReference>
<dbReference type="GO" id="GO:0006412">
    <property type="term" value="P:translation"/>
    <property type="evidence" value="ECO:0007669"/>
    <property type="project" value="UniProtKB-UniRule"/>
</dbReference>
<dbReference type="FunFam" id="4.10.830.10:FF:000001">
    <property type="entry name" value="30S ribosomal protein S14 type Z"/>
    <property type="match status" value="1"/>
</dbReference>
<dbReference type="Gene3D" id="4.10.830.10">
    <property type="entry name" value="30s Ribosomal Protein S14, Chain N"/>
    <property type="match status" value="1"/>
</dbReference>
<dbReference type="HAMAP" id="MF_01364_B">
    <property type="entry name" value="Ribosomal_uS14_2_B"/>
    <property type="match status" value="1"/>
</dbReference>
<dbReference type="InterPro" id="IPR001209">
    <property type="entry name" value="Ribosomal_uS14"/>
</dbReference>
<dbReference type="InterPro" id="IPR023053">
    <property type="entry name" value="Ribosomal_uS14_bact"/>
</dbReference>
<dbReference type="InterPro" id="IPR018271">
    <property type="entry name" value="Ribosomal_uS14_CS"/>
</dbReference>
<dbReference type="InterPro" id="IPR043140">
    <property type="entry name" value="Ribosomal_uS14_sf"/>
</dbReference>
<dbReference type="NCBIfam" id="NF005974">
    <property type="entry name" value="PRK08061.1"/>
    <property type="match status" value="1"/>
</dbReference>
<dbReference type="PANTHER" id="PTHR19836">
    <property type="entry name" value="30S RIBOSOMAL PROTEIN S14"/>
    <property type="match status" value="1"/>
</dbReference>
<dbReference type="PANTHER" id="PTHR19836:SF26">
    <property type="entry name" value="SMALL RIBOSOMAL SUBUNIT PROTEIN US14B"/>
    <property type="match status" value="1"/>
</dbReference>
<dbReference type="Pfam" id="PF00253">
    <property type="entry name" value="Ribosomal_S14"/>
    <property type="match status" value="1"/>
</dbReference>
<dbReference type="SUPFAM" id="SSF57716">
    <property type="entry name" value="Glucocorticoid receptor-like (DNA-binding domain)"/>
    <property type="match status" value="1"/>
</dbReference>
<dbReference type="PROSITE" id="PS00527">
    <property type="entry name" value="RIBOSOMAL_S14"/>
    <property type="match status" value="1"/>
</dbReference>
<gene>
    <name evidence="1" type="primary">rpsZ</name>
    <name evidence="1" type="synonym">rpsN</name>
    <name type="ordered locus">BCAH820_0135</name>
</gene>
<proteinExistence type="inferred from homology"/>
<reference key="1">
    <citation type="submission" date="2008-10" db="EMBL/GenBank/DDBJ databases">
        <title>Genome sequence of Bacillus cereus AH820.</title>
        <authorList>
            <person name="Dodson R.J."/>
            <person name="Durkin A.S."/>
            <person name="Rosovitz M.J."/>
            <person name="Rasko D.A."/>
            <person name="Hoffmaster A."/>
            <person name="Ravel J."/>
            <person name="Sutton G."/>
        </authorList>
    </citation>
    <scope>NUCLEOTIDE SEQUENCE [LARGE SCALE GENOMIC DNA]</scope>
    <source>
        <strain>AH820</strain>
    </source>
</reference>
<evidence type="ECO:0000255" key="1">
    <source>
        <dbReference type="HAMAP-Rule" id="MF_01364"/>
    </source>
</evidence>
<evidence type="ECO:0000305" key="2"/>
<name>RS14Z_BACC0</name>